<gene>
    <name evidence="1" type="primary">lspA</name>
    <name type="ordered locus">XAC1255</name>
</gene>
<keyword id="KW-0064">Aspartyl protease</keyword>
<keyword id="KW-0997">Cell inner membrane</keyword>
<keyword id="KW-1003">Cell membrane</keyword>
<keyword id="KW-0378">Hydrolase</keyword>
<keyword id="KW-0472">Membrane</keyword>
<keyword id="KW-0645">Protease</keyword>
<keyword id="KW-0812">Transmembrane</keyword>
<keyword id="KW-1133">Transmembrane helix</keyword>
<proteinExistence type="inferred from homology"/>
<dbReference type="EC" id="3.4.23.36" evidence="1"/>
<dbReference type="EMBL" id="AE008923">
    <property type="protein sequence ID" value="AAM36127.1"/>
    <property type="molecule type" value="Genomic_DNA"/>
</dbReference>
<dbReference type="RefSeq" id="WP_005928801.1">
    <property type="nucleotide sequence ID" value="NC_003919.1"/>
</dbReference>
<dbReference type="SMR" id="Q8PN18"/>
<dbReference type="GeneID" id="66910425"/>
<dbReference type="KEGG" id="xac:XAC1255"/>
<dbReference type="eggNOG" id="COG0597">
    <property type="taxonomic scope" value="Bacteria"/>
</dbReference>
<dbReference type="HOGENOM" id="CLU_083252_4_0_6"/>
<dbReference type="UniPathway" id="UPA00665"/>
<dbReference type="Proteomes" id="UP000000576">
    <property type="component" value="Chromosome"/>
</dbReference>
<dbReference type="GO" id="GO:0005886">
    <property type="term" value="C:plasma membrane"/>
    <property type="evidence" value="ECO:0007669"/>
    <property type="project" value="UniProtKB-SubCell"/>
</dbReference>
<dbReference type="GO" id="GO:0004190">
    <property type="term" value="F:aspartic-type endopeptidase activity"/>
    <property type="evidence" value="ECO:0007669"/>
    <property type="project" value="UniProtKB-UniRule"/>
</dbReference>
<dbReference type="GO" id="GO:0006508">
    <property type="term" value="P:proteolysis"/>
    <property type="evidence" value="ECO:0007669"/>
    <property type="project" value="UniProtKB-KW"/>
</dbReference>
<dbReference type="HAMAP" id="MF_00161">
    <property type="entry name" value="LspA"/>
    <property type="match status" value="1"/>
</dbReference>
<dbReference type="InterPro" id="IPR001872">
    <property type="entry name" value="Peptidase_A8"/>
</dbReference>
<dbReference type="NCBIfam" id="TIGR00077">
    <property type="entry name" value="lspA"/>
    <property type="match status" value="1"/>
</dbReference>
<dbReference type="PANTHER" id="PTHR33695">
    <property type="entry name" value="LIPOPROTEIN SIGNAL PEPTIDASE"/>
    <property type="match status" value="1"/>
</dbReference>
<dbReference type="PANTHER" id="PTHR33695:SF1">
    <property type="entry name" value="LIPOPROTEIN SIGNAL PEPTIDASE"/>
    <property type="match status" value="1"/>
</dbReference>
<dbReference type="Pfam" id="PF01252">
    <property type="entry name" value="Peptidase_A8"/>
    <property type="match status" value="1"/>
</dbReference>
<dbReference type="PRINTS" id="PR00781">
    <property type="entry name" value="LIPOSIGPTASE"/>
</dbReference>
<dbReference type="PROSITE" id="PS00855">
    <property type="entry name" value="SPASE_II"/>
    <property type="match status" value="1"/>
</dbReference>
<reference key="1">
    <citation type="journal article" date="2002" name="Nature">
        <title>Comparison of the genomes of two Xanthomonas pathogens with differing host specificities.</title>
        <authorList>
            <person name="da Silva A.C.R."/>
            <person name="Ferro J.A."/>
            <person name="Reinach F.C."/>
            <person name="Farah C.S."/>
            <person name="Furlan L.R."/>
            <person name="Quaggio R.B."/>
            <person name="Monteiro-Vitorello C.B."/>
            <person name="Van Sluys M.A."/>
            <person name="Almeida N.F. Jr."/>
            <person name="Alves L.M.C."/>
            <person name="do Amaral A.M."/>
            <person name="Bertolini M.C."/>
            <person name="Camargo L.E.A."/>
            <person name="Camarotte G."/>
            <person name="Cannavan F."/>
            <person name="Cardozo J."/>
            <person name="Chambergo F."/>
            <person name="Ciapina L.P."/>
            <person name="Cicarelli R.M.B."/>
            <person name="Coutinho L.L."/>
            <person name="Cursino-Santos J.R."/>
            <person name="El-Dorry H."/>
            <person name="Faria J.B."/>
            <person name="Ferreira A.J.S."/>
            <person name="Ferreira R.C.C."/>
            <person name="Ferro M.I.T."/>
            <person name="Formighieri E.F."/>
            <person name="Franco M.C."/>
            <person name="Greggio C.C."/>
            <person name="Gruber A."/>
            <person name="Katsuyama A.M."/>
            <person name="Kishi L.T."/>
            <person name="Leite R.P."/>
            <person name="Lemos E.G.M."/>
            <person name="Lemos M.V.F."/>
            <person name="Locali E.C."/>
            <person name="Machado M.A."/>
            <person name="Madeira A.M.B.N."/>
            <person name="Martinez-Rossi N.M."/>
            <person name="Martins E.C."/>
            <person name="Meidanis J."/>
            <person name="Menck C.F.M."/>
            <person name="Miyaki C.Y."/>
            <person name="Moon D.H."/>
            <person name="Moreira L.M."/>
            <person name="Novo M.T.M."/>
            <person name="Okura V.K."/>
            <person name="Oliveira M.C."/>
            <person name="Oliveira V.R."/>
            <person name="Pereira H.A."/>
            <person name="Rossi A."/>
            <person name="Sena J.A.D."/>
            <person name="Silva C."/>
            <person name="de Souza R.F."/>
            <person name="Spinola L.A.F."/>
            <person name="Takita M.A."/>
            <person name="Tamura R.E."/>
            <person name="Teixeira E.C."/>
            <person name="Tezza R.I.D."/>
            <person name="Trindade dos Santos M."/>
            <person name="Truffi D."/>
            <person name="Tsai S.M."/>
            <person name="White F.F."/>
            <person name="Setubal J.C."/>
            <person name="Kitajima J.P."/>
        </authorList>
    </citation>
    <scope>NUCLEOTIDE SEQUENCE [LARGE SCALE GENOMIC DNA]</scope>
    <source>
        <strain>306</strain>
    </source>
</reference>
<comment type="function">
    <text evidence="1">This protein specifically catalyzes the removal of signal peptides from prolipoproteins.</text>
</comment>
<comment type="catalytic activity">
    <reaction evidence="1">
        <text>Release of signal peptides from bacterial membrane prolipoproteins. Hydrolyzes -Xaa-Yaa-Zaa-|-(S,diacylglyceryl)Cys-, in which Xaa is hydrophobic (preferably Leu), and Yaa (Ala or Ser) and Zaa (Gly or Ala) have small, neutral side chains.</text>
        <dbReference type="EC" id="3.4.23.36"/>
    </reaction>
</comment>
<comment type="pathway">
    <text evidence="1">Protein modification; lipoprotein biosynthesis (signal peptide cleavage).</text>
</comment>
<comment type="subcellular location">
    <subcellularLocation>
        <location evidence="1">Cell inner membrane</location>
        <topology evidence="1">Multi-pass membrane protein</topology>
    </subcellularLocation>
</comment>
<comment type="similarity">
    <text evidence="1">Belongs to the peptidase A8 family.</text>
</comment>
<protein>
    <recommendedName>
        <fullName evidence="1">Lipoprotein signal peptidase</fullName>
        <ecNumber evidence="1">3.4.23.36</ecNumber>
    </recommendedName>
    <alternativeName>
        <fullName evidence="1">Prolipoprotein signal peptidase</fullName>
    </alternativeName>
    <alternativeName>
        <fullName evidence="1">Signal peptidase II</fullName>
        <shortName evidence="1">SPase II</shortName>
    </alternativeName>
</protein>
<sequence length="172" mass="18918">MSQRPNPSALIWLLLSALVVGLDQWSKAWVLSSLPEYTPVPVIDGFWNWYRTYNTGAAFSFLSDAGGWQLWFFTALAVGISGLLAFWLSRTARGQWRSALPYALVIGGAIGNVIDRLMHGHVVDFIQWYIGSHTWPSFNIADSAIVGGAIGIAVFGLFDKSDKQQPGTGNLR</sequence>
<feature type="chain" id="PRO_0000289458" description="Lipoprotein signal peptidase">
    <location>
        <begin position="1"/>
        <end position="172"/>
    </location>
</feature>
<feature type="transmembrane region" description="Helical" evidence="1">
    <location>
        <begin position="10"/>
        <end position="30"/>
    </location>
</feature>
<feature type="transmembrane region" description="Helical" evidence="1">
    <location>
        <begin position="68"/>
        <end position="88"/>
    </location>
</feature>
<feature type="transmembrane region" description="Helical" evidence="1">
    <location>
        <begin position="98"/>
        <end position="118"/>
    </location>
</feature>
<feature type="transmembrane region" description="Helical" evidence="1">
    <location>
        <begin position="138"/>
        <end position="158"/>
    </location>
</feature>
<feature type="active site" evidence="1">
    <location>
        <position position="124"/>
    </location>
</feature>
<feature type="active site" evidence="1">
    <location>
        <position position="142"/>
    </location>
</feature>
<evidence type="ECO:0000255" key="1">
    <source>
        <dbReference type="HAMAP-Rule" id="MF_00161"/>
    </source>
</evidence>
<accession>Q8PN18</accession>
<name>LSPA_XANAC</name>
<organism>
    <name type="scientific">Xanthomonas axonopodis pv. citri (strain 306)</name>
    <dbReference type="NCBI Taxonomy" id="190486"/>
    <lineage>
        <taxon>Bacteria</taxon>
        <taxon>Pseudomonadati</taxon>
        <taxon>Pseudomonadota</taxon>
        <taxon>Gammaproteobacteria</taxon>
        <taxon>Lysobacterales</taxon>
        <taxon>Lysobacteraceae</taxon>
        <taxon>Xanthomonas</taxon>
    </lineage>
</organism>